<keyword id="KW-1185">Reference proteome</keyword>
<keyword id="KW-0687">Ribonucleoprotein</keyword>
<keyword id="KW-0689">Ribosomal protein</keyword>
<keyword id="KW-0694">RNA-binding</keyword>
<keyword id="KW-0699">rRNA-binding</keyword>
<comment type="function">
    <text evidence="1">One of the primary rRNA binding proteins, this protein initially binds near the 5'-end of the 23S rRNA. It is important during the early stages of 50S assembly. It makes multiple contacts with different domains of the 23S rRNA in the assembled 50S subunit and ribosome.</text>
</comment>
<comment type="function">
    <text evidence="1">Forms part of the polypeptide exit tunnel.</text>
</comment>
<comment type="subunit">
    <text evidence="1">Part of the 50S ribosomal subunit.</text>
</comment>
<comment type="similarity">
    <text evidence="1">Belongs to the universal ribosomal protein uL4 family.</text>
</comment>
<dbReference type="EMBL" id="CP000423">
    <property type="protein sequence ID" value="ABJ71238.1"/>
    <property type="molecule type" value="Genomic_DNA"/>
</dbReference>
<dbReference type="RefSeq" id="WP_011674916.1">
    <property type="nucleotide sequence ID" value="NC_008526.1"/>
</dbReference>
<dbReference type="RefSeq" id="YP_807680.1">
    <property type="nucleotide sequence ID" value="NC_008526.1"/>
</dbReference>
<dbReference type="SMR" id="Q034Y4"/>
<dbReference type="STRING" id="321967.LSEI_2502"/>
<dbReference type="PaxDb" id="321967-LSEI_2502"/>
<dbReference type="KEGG" id="lca:LSEI_2502"/>
<dbReference type="PATRIC" id="fig|321967.11.peg.2456"/>
<dbReference type="HOGENOM" id="CLU_041575_5_2_9"/>
<dbReference type="Proteomes" id="UP000001651">
    <property type="component" value="Chromosome"/>
</dbReference>
<dbReference type="GO" id="GO:1990904">
    <property type="term" value="C:ribonucleoprotein complex"/>
    <property type="evidence" value="ECO:0007669"/>
    <property type="project" value="UniProtKB-KW"/>
</dbReference>
<dbReference type="GO" id="GO:0005840">
    <property type="term" value="C:ribosome"/>
    <property type="evidence" value="ECO:0007669"/>
    <property type="project" value="UniProtKB-KW"/>
</dbReference>
<dbReference type="GO" id="GO:0019843">
    <property type="term" value="F:rRNA binding"/>
    <property type="evidence" value="ECO:0007669"/>
    <property type="project" value="UniProtKB-UniRule"/>
</dbReference>
<dbReference type="GO" id="GO:0003735">
    <property type="term" value="F:structural constituent of ribosome"/>
    <property type="evidence" value="ECO:0007669"/>
    <property type="project" value="InterPro"/>
</dbReference>
<dbReference type="GO" id="GO:0006412">
    <property type="term" value="P:translation"/>
    <property type="evidence" value="ECO:0007669"/>
    <property type="project" value="UniProtKB-UniRule"/>
</dbReference>
<dbReference type="FunFam" id="3.40.1370.10:FF:000003">
    <property type="entry name" value="50S ribosomal protein L4"/>
    <property type="match status" value="1"/>
</dbReference>
<dbReference type="Gene3D" id="3.40.1370.10">
    <property type="match status" value="1"/>
</dbReference>
<dbReference type="HAMAP" id="MF_01328_B">
    <property type="entry name" value="Ribosomal_uL4_B"/>
    <property type="match status" value="1"/>
</dbReference>
<dbReference type="InterPro" id="IPR002136">
    <property type="entry name" value="Ribosomal_uL4"/>
</dbReference>
<dbReference type="InterPro" id="IPR013005">
    <property type="entry name" value="Ribosomal_uL4-like"/>
</dbReference>
<dbReference type="InterPro" id="IPR023574">
    <property type="entry name" value="Ribosomal_uL4_dom_sf"/>
</dbReference>
<dbReference type="NCBIfam" id="TIGR03953">
    <property type="entry name" value="rplD_bact"/>
    <property type="match status" value="1"/>
</dbReference>
<dbReference type="PANTHER" id="PTHR10746">
    <property type="entry name" value="50S RIBOSOMAL PROTEIN L4"/>
    <property type="match status" value="1"/>
</dbReference>
<dbReference type="PANTHER" id="PTHR10746:SF6">
    <property type="entry name" value="LARGE RIBOSOMAL SUBUNIT PROTEIN UL4M"/>
    <property type="match status" value="1"/>
</dbReference>
<dbReference type="Pfam" id="PF00573">
    <property type="entry name" value="Ribosomal_L4"/>
    <property type="match status" value="1"/>
</dbReference>
<dbReference type="SUPFAM" id="SSF52166">
    <property type="entry name" value="Ribosomal protein L4"/>
    <property type="match status" value="1"/>
</dbReference>
<gene>
    <name evidence="1" type="primary">rplD</name>
    <name type="ordered locus">LSEI_2502</name>
</gene>
<organism>
    <name type="scientific">Lacticaseibacillus paracasei (strain ATCC 334 / BCRC 17002 / CCUG 31169 / CIP 107868 / KCTC 3260 / NRRL B-441)</name>
    <name type="common">Lactobacillus paracasei</name>
    <dbReference type="NCBI Taxonomy" id="321967"/>
    <lineage>
        <taxon>Bacteria</taxon>
        <taxon>Bacillati</taxon>
        <taxon>Bacillota</taxon>
        <taxon>Bacilli</taxon>
        <taxon>Lactobacillales</taxon>
        <taxon>Lactobacillaceae</taxon>
        <taxon>Lacticaseibacillus</taxon>
    </lineage>
</organism>
<name>RL4_LACP3</name>
<proteinExistence type="inferred from homology"/>
<feature type="chain" id="PRO_1000052421" description="Large ribosomal subunit protein uL4">
    <location>
        <begin position="1"/>
        <end position="207"/>
    </location>
</feature>
<feature type="region of interest" description="Disordered" evidence="2">
    <location>
        <begin position="45"/>
        <end position="78"/>
    </location>
</feature>
<accession>Q034Y4</accession>
<sequence>MANVTLYKQDGSENGKVELNDAIWAVEPNENVVFDAVVMQRDSLRQGTHAVKNRSAVSGGGRKPWRQKGTGRARQGSIRSPQWRGGGIVFGPTPRSYAYKLPKKVRRLAIKSVLSQKVLDSDLVVVDGLNFDAPKTKAFATVLDGLKVSDKALVVLEDGNEVAAKAARNLPNVKVVPAEGINVLDVVDYKKLILTQSALQKIEEVLA</sequence>
<protein>
    <recommendedName>
        <fullName evidence="1">Large ribosomal subunit protein uL4</fullName>
    </recommendedName>
    <alternativeName>
        <fullName evidence="3">50S ribosomal protein L4</fullName>
    </alternativeName>
</protein>
<evidence type="ECO:0000255" key="1">
    <source>
        <dbReference type="HAMAP-Rule" id="MF_01328"/>
    </source>
</evidence>
<evidence type="ECO:0000256" key="2">
    <source>
        <dbReference type="SAM" id="MobiDB-lite"/>
    </source>
</evidence>
<evidence type="ECO:0000305" key="3"/>
<reference key="1">
    <citation type="journal article" date="2006" name="Proc. Natl. Acad. Sci. U.S.A.">
        <title>Comparative genomics of the lactic acid bacteria.</title>
        <authorList>
            <person name="Makarova K.S."/>
            <person name="Slesarev A."/>
            <person name="Wolf Y.I."/>
            <person name="Sorokin A."/>
            <person name="Mirkin B."/>
            <person name="Koonin E.V."/>
            <person name="Pavlov A."/>
            <person name="Pavlova N."/>
            <person name="Karamychev V."/>
            <person name="Polouchine N."/>
            <person name="Shakhova V."/>
            <person name="Grigoriev I."/>
            <person name="Lou Y."/>
            <person name="Rohksar D."/>
            <person name="Lucas S."/>
            <person name="Huang K."/>
            <person name="Goodstein D.M."/>
            <person name="Hawkins T."/>
            <person name="Plengvidhya V."/>
            <person name="Welker D."/>
            <person name="Hughes J."/>
            <person name="Goh Y."/>
            <person name="Benson A."/>
            <person name="Baldwin K."/>
            <person name="Lee J.-H."/>
            <person name="Diaz-Muniz I."/>
            <person name="Dosti B."/>
            <person name="Smeianov V."/>
            <person name="Wechter W."/>
            <person name="Barabote R."/>
            <person name="Lorca G."/>
            <person name="Altermann E."/>
            <person name="Barrangou R."/>
            <person name="Ganesan B."/>
            <person name="Xie Y."/>
            <person name="Rawsthorne H."/>
            <person name="Tamir D."/>
            <person name="Parker C."/>
            <person name="Breidt F."/>
            <person name="Broadbent J.R."/>
            <person name="Hutkins R."/>
            <person name="O'Sullivan D."/>
            <person name="Steele J."/>
            <person name="Unlu G."/>
            <person name="Saier M.H. Jr."/>
            <person name="Klaenhammer T."/>
            <person name="Richardson P."/>
            <person name="Kozyavkin S."/>
            <person name="Weimer B.C."/>
            <person name="Mills D.A."/>
        </authorList>
    </citation>
    <scope>NUCLEOTIDE SEQUENCE [LARGE SCALE GENOMIC DNA]</scope>
    <source>
        <strain>ATCC 334 / BCRC 17002 / CCUG 31169 / CIP 107868 / KCTC 3260 / NRRL B-441</strain>
    </source>
</reference>